<reference key="1">
    <citation type="journal article" date="1998" name="J. Biol. Chem.">
        <title>The soluble alpha-glycerophosphate oxidase from Enterococcus casseliflavus. Sequence homology with the membrane-associated dehydrogenase and kinetic analysis of the recombinant enzyme.</title>
        <authorList>
            <person name="Parsonage D."/>
            <person name="Luba J."/>
            <person name="Mallett T.C."/>
            <person name="Claiborne A."/>
        </authorList>
    </citation>
    <scope>NUCLEOTIDE SEQUENCE [GENOMIC DNA]</scope>
    <source>
        <strain>ATCC 27336</strain>
    </source>
</reference>
<reference key="2">
    <citation type="journal article" date="2001" name="Science">
        <title>Complete genome sequence of a virulent isolate of Streptococcus pneumoniae.</title>
        <authorList>
            <person name="Tettelin H."/>
            <person name="Nelson K.E."/>
            <person name="Paulsen I.T."/>
            <person name="Eisen J.A."/>
            <person name="Read T.D."/>
            <person name="Peterson S.N."/>
            <person name="Heidelberg J.F."/>
            <person name="DeBoy R.T."/>
            <person name="Haft D.H."/>
            <person name="Dodson R.J."/>
            <person name="Durkin A.S."/>
            <person name="Gwinn M.L."/>
            <person name="Kolonay J.F."/>
            <person name="Nelson W.C."/>
            <person name="Peterson J.D."/>
            <person name="Umayam L.A."/>
            <person name="White O."/>
            <person name="Salzberg S.L."/>
            <person name="Lewis M.R."/>
            <person name="Radune D."/>
            <person name="Holtzapple E.K."/>
            <person name="Khouri H.M."/>
            <person name="Wolf A.M."/>
            <person name="Utterback T.R."/>
            <person name="Hansen C.L."/>
            <person name="McDonald L.A."/>
            <person name="Feldblyum T.V."/>
            <person name="Angiuoli S.V."/>
            <person name="Dickinson T."/>
            <person name="Hickey E.K."/>
            <person name="Holt I.E."/>
            <person name="Loftus B.J."/>
            <person name="Yang F."/>
            <person name="Smith H.O."/>
            <person name="Venter J.C."/>
            <person name="Dougherty B.A."/>
            <person name="Morrison D.A."/>
            <person name="Hollingshead S.K."/>
            <person name="Fraser C.M."/>
        </authorList>
    </citation>
    <scope>NUCLEOTIDE SEQUENCE [LARGE SCALE GENOMIC DNA]</scope>
    <source>
        <strain>ATCC BAA-334 / TIGR4</strain>
    </source>
</reference>
<reference key="3">
    <citation type="journal article" date="1993" name="Mol. Microbiol.">
        <title>Genetic identification of exported proteins in Streptococcus pneumoniae.</title>
        <authorList>
            <person name="Pearce B.J."/>
            <person name="Yin Y.B."/>
            <person name="Masure H.R."/>
        </authorList>
    </citation>
    <scope>NUCLEOTIDE SEQUENCE [GENOMIC DNA] OF 271-408</scope>
    <source>
        <strain>R6x</strain>
    </source>
</reference>
<accession>P35596</accession>
<accession>O87017</accession>
<dbReference type="EC" id="1.1.3.21"/>
<dbReference type="EMBL" id="U94770">
    <property type="protein sequence ID" value="AAC34740.1"/>
    <property type="molecule type" value="Genomic_DNA"/>
</dbReference>
<dbReference type="EMBL" id="AE005672">
    <property type="protein sequence ID" value="AAK76236.1"/>
    <property type="molecule type" value="Genomic_DNA"/>
</dbReference>
<dbReference type="EMBL" id="L20560">
    <property type="protein sequence ID" value="AAA26882.1"/>
    <property type="molecule type" value="Genomic_DNA"/>
</dbReference>
<dbReference type="PIR" id="C95255">
    <property type="entry name" value="C95255"/>
</dbReference>
<dbReference type="RefSeq" id="WP_000395957.1">
    <property type="nucleotide sequence ID" value="NC_003028.3"/>
</dbReference>
<dbReference type="SMR" id="P35596"/>
<dbReference type="PaxDb" id="170187-SP_2185"/>
<dbReference type="EnsemblBacteria" id="AAK76236">
    <property type="protein sequence ID" value="AAK76236"/>
    <property type="gene ID" value="SP_2185"/>
</dbReference>
<dbReference type="KEGG" id="spn:SP_2185"/>
<dbReference type="eggNOG" id="COG0578">
    <property type="taxonomic scope" value="Bacteria"/>
</dbReference>
<dbReference type="PhylomeDB" id="P35596"/>
<dbReference type="BioCyc" id="SPNE170187:G1FZB-2283-MONOMER"/>
<dbReference type="UniPathway" id="UPA00940"/>
<dbReference type="Proteomes" id="UP000000585">
    <property type="component" value="Chromosome"/>
</dbReference>
<dbReference type="GO" id="GO:0005886">
    <property type="term" value="C:plasma membrane"/>
    <property type="evidence" value="ECO:0007669"/>
    <property type="project" value="UniProtKB-SubCell"/>
</dbReference>
<dbReference type="GO" id="GO:0004368">
    <property type="term" value="F:glycerol-3-phosphate dehydrogenase (quinone) activity"/>
    <property type="evidence" value="ECO:0007669"/>
    <property type="project" value="InterPro"/>
</dbReference>
<dbReference type="GO" id="GO:0004369">
    <property type="term" value="F:glycerol-3-phosphate oxidase activity"/>
    <property type="evidence" value="ECO:0007669"/>
    <property type="project" value="UniProtKB-EC"/>
</dbReference>
<dbReference type="GO" id="GO:0006071">
    <property type="term" value="P:glycerol metabolic process"/>
    <property type="evidence" value="ECO:0007669"/>
    <property type="project" value="UniProtKB-KW"/>
</dbReference>
<dbReference type="GO" id="GO:0046168">
    <property type="term" value="P:glycerol-3-phosphate catabolic process"/>
    <property type="evidence" value="ECO:0007669"/>
    <property type="project" value="TreeGrafter"/>
</dbReference>
<dbReference type="GO" id="GO:0006650">
    <property type="term" value="P:glycerophospholipid metabolic process"/>
    <property type="evidence" value="ECO:0007669"/>
    <property type="project" value="UniProtKB-UniPathway"/>
</dbReference>
<dbReference type="Gene3D" id="1.10.8.870">
    <property type="entry name" value="Alpha-glycerophosphate oxidase, cap domain"/>
    <property type="match status" value="1"/>
</dbReference>
<dbReference type="Gene3D" id="3.30.9.10">
    <property type="entry name" value="D-Amino Acid Oxidase, subunit A, domain 2"/>
    <property type="match status" value="1"/>
</dbReference>
<dbReference type="Gene3D" id="3.50.50.60">
    <property type="entry name" value="FAD/NAD(P)-binding domain"/>
    <property type="match status" value="2"/>
</dbReference>
<dbReference type="InterPro" id="IPR031656">
    <property type="entry name" value="DAO_C"/>
</dbReference>
<dbReference type="InterPro" id="IPR038299">
    <property type="entry name" value="DAO_C_sf"/>
</dbReference>
<dbReference type="InterPro" id="IPR006076">
    <property type="entry name" value="FAD-dep_OxRdtase"/>
</dbReference>
<dbReference type="InterPro" id="IPR036188">
    <property type="entry name" value="FAD/NAD-bd_sf"/>
</dbReference>
<dbReference type="InterPro" id="IPR000447">
    <property type="entry name" value="G3P_DH_FAD-dep"/>
</dbReference>
<dbReference type="NCBIfam" id="NF033461">
    <property type="entry name" value="glycerol3P_ox_1"/>
    <property type="match status" value="1"/>
</dbReference>
<dbReference type="PANTHER" id="PTHR11985:SF35">
    <property type="entry name" value="ANAEROBIC GLYCEROL-3-PHOSPHATE DEHYDROGENASE SUBUNIT A"/>
    <property type="match status" value="1"/>
</dbReference>
<dbReference type="PANTHER" id="PTHR11985">
    <property type="entry name" value="GLYCEROL-3-PHOSPHATE DEHYDROGENASE"/>
    <property type="match status" value="1"/>
</dbReference>
<dbReference type="Pfam" id="PF01266">
    <property type="entry name" value="DAO"/>
    <property type="match status" value="1"/>
</dbReference>
<dbReference type="Pfam" id="PF16901">
    <property type="entry name" value="DAO_C"/>
    <property type="match status" value="1"/>
</dbReference>
<dbReference type="PRINTS" id="PR01001">
    <property type="entry name" value="FADG3PDH"/>
</dbReference>
<dbReference type="SUPFAM" id="SSF54373">
    <property type="entry name" value="FAD-linked reductases, C-terminal domain"/>
    <property type="match status" value="1"/>
</dbReference>
<dbReference type="SUPFAM" id="SSF51905">
    <property type="entry name" value="FAD/NAD(P)-binding domain"/>
    <property type="match status" value="1"/>
</dbReference>
<dbReference type="PROSITE" id="PS00977">
    <property type="entry name" value="FAD_G3PDH_1"/>
    <property type="match status" value="1"/>
</dbReference>
<organism>
    <name type="scientific">Streptococcus pneumoniae serotype 4 (strain ATCC BAA-334 / TIGR4)</name>
    <dbReference type="NCBI Taxonomy" id="170187"/>
    <lineage>
        <taxon>Bacteria</taxon>
        <taxon>Bacillati</taxon>
        <taxon>Bacillota</taxon>
        <taxon>Bacilli</taxon>
        <taxon>Lactobacillales</taxon>
        <taxon>Streptococcaceae</taxon>
        <taxon>Streptococcus</taxon>
    </lineage>
</organism>
<name>GLPO_STRPN</name>
<proteinExistence type="inferred from homology"/>
<sequence length="608" mass="66796">MEFSKKTRELSIKKMQERTLDLLIIGGGITGAGVALQAAASGLETGLIEMQDFAEGTSSRSTKLVHGGLRYLKQFDVEVVSDTVSERAVVQQIAPHIPKSDPMLLPVYDEDGATFSLFRLKVAMDLYDLLAGVSNTPAANKVLSKDQVLERQPNLKKEGLVGGGVYLDFRNNDARLVIENIKRANQDGALIANHVKAEGFLFDESGKITGVVARDLLTDQVFEIKARLVINTTGPWSDKVRNLSNKGTQFSQMRPTKGVHLVVDSSKIKVSQPVYFDTGLGDGRMVFVLPRENKTYFGTTDTDYTGDLEHPKVTQEDVDYLLGIVNNRFPESNITIDDIESSWAGLRPLIAGNSASDYNGGNNGTISDESFDNLIATVESYLSKEKTREDVESAVSKLESSTSEKHLDPSAVSRGSSLDRDDNGLLTLAGGKITDYRKMAEGAMERVVDILKAEFDRSFKLINSKTYPVSGGELNPANVDSEIEAFAQLGVSRGLDSKEAHYLANLYGSNAPKVFALAHSLEQAPGLSLADTLSLHYAMRNELTLSPVDFLLRRTNHMLFMRDSLDSIVEPILDEMGRFYDWTEEEKATYRADVEAALANNDLAELKN</sequence>
<gene>
    <name type="primary">glpO</name>
    <name type="synonym">exp6</name>
    <name type="ordered locus">SP_2185</name>
</gene>
<comment type="catalytic activity">
    <reaction>
        <text>sn-glycerol 3-phosphate + O2 = dihydroxyacetone phosphate + H2O2</text>
        <dbReference type="Rhea" id="RHEA:18369"/>
        <dbReference type="ChEBI" id="CHEBI:15379"/>
        <dbReference type="ChEBI" id="CHEBI:16240"/>
        <dbReference type="ChEBI" id="CHEBI:57597"/>
        <dbReference type="ChEBI" id="CHEBI:57642"/>
        <dbReference type="EC" id="1.1.3.21"/>
    </reaction>
</comment>
<comment type="cofactor">
    <cofactor>
        <name>FAD</name>
        <dbReference type="ChEBI" id="CHEBI:57692"/>
    </cofactor>
</comment>
<comment type="pathway">
    <text>Membrane lipid metabolism; glycerophospholipid metabolism.</text>
</comment>
<comment type="subcellular location">
    <subcellularLocation>
        <location>Cell membrane</location>
        <topology>Peripheral membrane protein</topology>
    </subcellularLocation>
</comment>
<comment type="similarity">
    <text evidence="3">Belongs to the FAD-dependent glycerol-3-phosphate dehydrogenase family.</text>
</comment>
<protein>
    <recommendedName>
        <fullName>Alpha-glycerophosphate oxidase</fullName>
        <ecNumber>1.1.3.21</ecNumber>
    </recommendedName>
    <alternativeName>
        <fullName>Exported protein 6</fullName>
    </alternativeName>
    <alternativeName>
        <fullName>Glycerol-3-phosphate oxidase</fullName>
    </alternativeName>
</protein>
<evidence type="ECO:0000255" key="1"/>
<evidence type="ECO:0000256" key="2">
    <source>
        <dbReference type="SAM" id="MobiDB-lite"/>
    </source>
</evidence>
<evidence type="ECO:0000305" key="3"/>
<keyword id="KW-1003">Cell membrane</keyword>
<keyword id="KW-0274">FAD</keyword>
<keyword id="KW-0285">Flavoprotein</keyword>
<keyword id="KW-0319">Glycerol metabolism</keyword>
<keyword id="KW-0472">Membrane</keyword>
<keyword id="KW-0560">Oxidoreductase</keyword>
<keyword id="KW-1185">Reference proteome</keyword>
<feature type="chain" id="PRO_0000126108" description="Alpha-glycerophosphate oxidase">
    <location>
        <begin position="1"/>
        <end position="608"/>
    </location>
</feature>
<feature type="region of interest" description="Disordered" evidence="2">
    <location>
        <begin position="393"/>
        <end position="418"/>
    </location>
</feature>
<feature type="binding site" evidence="1">
    <location>
        <begin position="21"/>
        <end position="49"/>
    </location>
    <ligand>
        <name>FAD</name>
        <dbReference type="ChEBI" id="CHEBI:57692"/>
    </ligand>
</feature>
<feature type="sequence conflict" description="In Ref. 1; AAC34740." evidence="3" ref="1">
    <original>S</original>
    <variation>P</variation>
    <location>
        <position position="100"/>
    </location>
</feature>
<feature type="sequence conflict" description="In Ref. 1; AAC34740." evidence="3" ref="1">
    <original>A</original>
    <variation>T</variation>
    <location>
        <position position="138"/>
    </location>
</feature>
<feature type="sequence conflict" description="In Ref. 3; AAA26882." evidence="3" ref="3">
    <original>Y</original>
    <variation>S</variation>
    <location>
        <position position="275"/>
    </location>
</feature>
<feature type="sequence conflict" description="In Ref. 3; AAA26882." evidence="3" ref="3">
    <original>S</original>
    <variation>R</variation>
    <location>
        <position position="367"/>
    </location>
</feature>
<feature type="sequence conflict" description="In Ref. 1; AAC34740." evidence="3" ref="1">
    <original>T</original>
    <variation>A</variation>
    <location>
        <position position="544"/>
    </location>
</feature>
<feature type="sequence conflict" description="In Ref. 1; AAC34740." evidence="3" ref="1">
    <original>I</original>
    <variation>V</variation>
    <location>
        <position position="572"/>
    </location>
</feature>